<organism>
    <name type="scientific">Corynebacterium aurimucosum (strain ATCC 700975 / DSM 44827 / CIP 107346 / CN-1)</name>
    <name type="common">Corynebacterium nigricans</name>
    <dbReference type="NCBI Taxonomy" id="548476"/>
    <lineage>
        <taxon>Bacteria</taxon>
        <taxon>Bacillati</taxon>
        <taxon>Actinomycetota</taxon>
        <taxon>Actinomycetes</taxon>
        <taxon>Mycobacteriales</taxon>
        <taxon>Corynebacteriaceae</taxon>
        <taxon>Corynebacterium</taxon>
    </lineage>
</organism>
<reference key="1">
    <citation type="journal article" date="2010" name="BMC Genomics">
        <title>Complete genome sequence and lifestyle of black-pigmented Corynebacterium aurimucosum ATCC 700975 (formerly C. nigricans CN-1) isolated from a vaginal swab of a woman with spontaneous abortion.</title>
        <authorList>
            <person name="Trost E."/>
            <person name="Gotker S."/>
            <person name="Schneider J."/>
            <person name="Schneiker-Bekel S."/>
            <person name="Szczepanowski R."/>
            <person name="Tilker A."/>
            <person name="Viehoever P."/>
            <person name="Arnold W."/>
            <person name="Bekel T."/>
            <person name="Blom J."/>
            <person name="Gartemann K.H."/>
            <person name="Linke B."/>
            <person name="Goesmann A."/>
            <person name="Puhler A."/>
            <person name="Shukla S.K."/>
            <person name="Tauch A."/>
        </authorList>
    </citation>
    <scope>NUCLEOTIDE SEQUENCE [LARGE SCALE GENOMIC DNA]</scope>
    <source>
        <strain>ATCC 700975 / DSM 44827 / CIP 107346 / CN-1</strain>
    </source>
</reference>
<name>KHSE_CORA7</name>
<sequence length="307" mass="32367">MSIDIEVGTKVTVQVPASSANLGPGYDTLGIALSLYDTVEVEVTRSGLEVEIFGEGAEELPRDGSHLVVKAIRSALKAADVEVTGLRVVCTNNIPQSRGLGSSASAAVAGVAAGNGLAGFPLSEEQVVQLSSAFEGHPDNAAASVLGNAVVSWTTVPVDGRSLPEYRAATLEVHPSIKATALVPDFHASTQAVRRVLPSHVTHADAAFNVSRTAVNVAALTAYPDLLWEGTRDRLHQPYRADVLPVTAEWVNRLRNRGYAAYLSGAGPTVMVLHTEPIEEAILDDAREQNLRVLELEVAGPVSVERG</sequence>
<dbReference type="EC" id="2.7.1.39" evidence="1"/>
<dbReference type="EMBL" id="CP001601">
    <property type="protein sequence ID" value="ACP32645.1"/>
    <property type="molecule type" value="Genomic_DNA"/>
</dbReference>
<dbReference type="RefSeq" id="WP_010187115.1">
    <property type="nucleotide sequence ID" value="NZ_ACLH01000007.1"/>
</dbReference>
<dbReference type="SMR" id="C3PFP1"/>
<dbReference type="STRING" id="548476.cauri_1050"/>
<dbReference type="GeneID" id="31923672"/>
<dbReference type="KEGG" id="car:cauri_1050"/>
<dbReference type="eggNOG" id="COG0083">
    <property type="taxonomic scope" value="Bacteria"/>
</dbReference>
<dbReference type="HOGENOM" id="CLU_041243_0_2_11"/>
<dbReference type="OrthoDB" id="9769912at2"/>
<dbReference type="UniPathway" id="UPA00050">
    <property type="reaction ID" value="UER00064"/>
</dbReference>
<dbReference type="Proteomes" id="UP000002077">
    <property type="component" value="Chromosome"/>
</dbReference>
<dbReference type="GO" id="GO:0005737">
    <property type="term" value="C:cytoplasm"/>
    <property type="evidence" value="ECO:0007669"/>
    <property type="project" value="UniProtKB-SubCell"/>
</dbReference>
<dbReference type="GO" id="GO:0005524">
    <property type="term" value="F:ATP binding"/>
    <property type="evidence" value="ECO:0007669"/>
    <property type="project" value="UniProtKB-UniRule"/>
</dbReference>
<dbReference type="GO" id="GO:0004413">
    <property type="term" value="F:homoserine kinase activity"/>
    <property type="evidence" value="ECO:0007669"/>
    <property type="project" value="UniProtKB-UniRule"/>
</dbReference>
<dbReference type="GO" id="GO:0009088">
    <property type="term" value="P:threonine biosynthetic process"/>
    <property type="evidence" value="ECO:0007669"/>
    <property type="project" value="UniProtKB-UniRule"/>
</dbReference>
<dbReference type="Gene3D" id="3.30.230.10">
    <property type="match status" value="1"/>
</dbReference>
<dbReference type="Gene3D" id="3.30.70.890">
    <property type="entry name" value="GHMP kinase, C-terminal domain"/>
    <property type="match status" value="1"/>
</dbReference>
<dbReference type="HAMAP" id="MF_00384">
    <property type="entry name" value="Homoser_kinase"/>
    <property type="match status" value="1"/>
</dbReference>
<dbReference type="InterPro" id="IPR013750">
    <property type="entry name" value="GHMP_kinase_C_dom"/>
</dbReference>
<dbReference type="InterPro" id="IPR036554">
    <property type="entry name" value="GHMP_kinase_C_sf"/>
</dbReference>
<dbReference type="InterPro" id="IPR006204">
    <property type="entry name" value="GHMP_kinase_N_dom"/>
</dbReference>
<dbReference type="InterPro" id="IPR006203">
    <property type="entry name" value="GHMP_knse_ATP-bd_CS"/>
</dbReference>
<dbReference type="InterPro" id="IPR000870">
    <property type="entry name" value="Homoserine_kinase"/>
</dbReference>
<dbReference type="InterPro" id="IPR020568">
    <property type="entry name" value="Ribosomal_Su5_D2-typ_SF"/>
</dbReference>
<dbReference type="InterPro" id="IPR014721">
    <property type="entry name" value="Ribsml_uS5_D2-typ_fold_subgr"/>
</dbReference>
<dbReference type="NCBIfam" id="TIGR00191">
    <property type="entry name" value="thrB"/>
    <property type="match status" value="1"/>
</dbReference>
<dbReference type="PANTHER" id="PTHR20861:SF1">
    <property type="entry name" value="HOMOSERINE KINASE"/>
    <property type="match status" value="1"/>
</dbReference>
<dbReference type="PANTHER" id="PTHR20861">
    <property type="entry name" value="HOMOSERINE/4-DIPHOSPHOCYTIDYL-2-C-METHYL-D-ERYTHRITOL KINASE"/>
    <property type="match status" value="1"/>
</dbReference>
<dbReference type="Pfam" id="PF08544">
    <property type="entry name" value="GHMP_kinases_C"/>
    <property type="match status" value="1"/>
</dbReference>
<dbReference type="Pfam" id="PF00288">
    <property type="entry name" value="GHMP_kinases_N"/>
    <property type="match status" value="1"/>
</dbReference>
<dbReference type="PIRSF" id="PIRSF000676">
    <property type="entry name" value="Homoser_kin"/>
    <property type="match status" value="1"/>
</dbReference>
<dbReference type="PRINTS" id="PR00958">
    <property type="entry name" value="HOMSERKINASE"/>
</dbReference>
<dbReference type="SUPFAM" id="SSF55060">
    <property type="entry name" value="GHMP Kinase, C-terminal domain"/>
    <property type="match status" value="1"/>
</dbReference>
<dbReference type="SUPFAM" id="SSF54211">
    <property type="entry name" value="Ribosomal protein S5 domain 2-like"/>
    <property type="match status" value="1"/>
</dbReference>
<dbReference type="PROSITE" id="PS00627">
    <property type="entry name" value="GHMP_KINASES_ATP"/>
    <property type="match status" value="1"/>
</dbReference>
<feature type="chain" id="PRO_1000134246" description="Homoserine kinase">
    <location>
        <begin position="1"/>
        <end position="307"/>
    </location>
</feature>
<feature type="binding site" evidence="1">
    <location>
        <begin position="95"/>
        <end position="105"/>
    </location>
    <ligand>
        <name>ATP</name>
        <dbReference type="ChEBI" id="CHEBI:30616"/>
    </ligand>
</feature>
<evidence type="ECO:0000255" key="1">
    <source>
        <dbReference type="HAMAP-Rule" id="MF_00384"/>
    </source>
</evidence>
<gene>
    <name evidence="1" type="primary">thrB</name>
    <name type="ordered locus">cauri_1050</name>
</gene>
<protein>
    <recommendedName>
        <fullName evidence="1">Homoserine kinase</fullName>
        <shortName evidence="1">HK</shortName>
        <shortName evidence="1">HSK</shortName>
        <ecNumber evidence="1">2.7.1.39</ecNumber>
    </recommendedName>
</protein>
<keyword id="KW-0028">Amino-acid biosynthesis</keyword>
<keyword id="KW-0067">ATP-binding</keyword>
<keyword id="KW-0963">Cytoplasm</keyword>
<keyword id="KW-0418">Kinase</keyword>
<keyword id="KW-0547">Nucleotide-binding</keyword>
<keyword id="KW-1185">Reference proteome</keyword>
<keyword id="KW-0791">Threonine biosynthesis</keyword>
<keyword id="KW-0808">Transferase</keyword>
<comment type="function">
    <text evidence="1">Catalyzes the ATP-dependent phosphorylation of L-homoserine to L-homoserine phosphate.</text>
</comment>
<comment type="catalytic activity">
    <reaction evidence="1">
        <text>L-homoserine + ATP = O-phospho-L-homoserine + ADP + H(+)</text>
        <dbReference type="Rhea" id="RHEA:13985"/>
        <dbReference type="ChEBI" id="CHEBI:15378"/>
        <dbReference type="ChEBI" id="CHEBI:30616"/>
        <dbReference type="ChEBI" id="CHEBI:57476"/>
        <dbReference type="ChEBI" id="CHEBI:57590"/>
        <dbReference type="ChEBI" id="CHEBI:456216"/>
        <dbReference type="EC" id="2.7.1.39"/>
    </reaction>
</comment>
<comment type="pathway">
    <text evidence="1">Amino-acid biosynthesis; L-threonine biosynthesis; L-threonine from L-aspartate: step 4/5.</text>
</comment>
<comment type="subcellular location">
    <subcellularLocation>
        <location evidence="1">Cytoplasm</location>
    </subcellularLocation>
</comment>
<comment type="similarity">
    <text evidence="1">Belongs to the GHMP kinase family. Homoserine kinase subfamily.</text>
</comment>
<proteinExistence type="inferred from homology"/>
<accession>C3PFP1</accession>